<keyword id="KW-0963">Cytoplasm</keyword>
<keyword id="KW-0489">Methyltransferase</keyword>
<keyword id="KW-1185">Reference proteome</keyword>
<keyword id="KW-0694">RNA-binding</keyword>
<keyword id="KW-0698">rRNA processing</keyword>
<keyword id="KW-0949">S-adenosyl-L-methionine</keyword>
<keyword id="KW-0808">Transferase</keyword>
<organism>
    <name type="scientific">Escherichia coli O6:H1 (strain CFT073 / ATCC 700928 / UPEC)</name>
    <dbReference type="NCBI Taxonomy" id="199310"/>
    <lineage>
        <taxon>Bacteria</taxon>
        <taxon>Pseudomonadati</taxon>
        <taxon>Pseudomonadota</taxon>
        <taxon>Gammaproteobacteria</taxon>
        <taxon>Enterobacterales</taxon>
        <taxon>Enterobacteriaceae</taxon>
        <taxon>Escherichia</taxon>
    </lineage>
</organism>
<feature type="chain" id="PRO_0000366231" description="Ribosomal RNA large subunit methyltransferase I">
    <location>
        <begin position="1"/>
        <end position="396"/>
    </location>
</feature>
<feature type="domain" description="PUA" evidence="1">
    <location>
        <begin position="2"/>
        <end position="81"/>
    </location>
</feature>
<name>RLMI_ECOL6</name>
<reference key="1">
    <citation type="journal article" date="2002" name="Proc. Natl. Acad. Sci. U.S.A.">
        <title>Extensive mosaic structure revealed by the complete genome sequence of uropathogenic Escherichia coli.</title>
        <authorList>
            <person name="Welch R.A."/>
            <person name="Burland V."/>
            <person name="Plunkett G. III"/>
            <person name="Redford P."/>
            <person name="Roesch P."/>
            <person name="Rasko D."/>
            <person name="Buckles E.L."/>
            <person name="Liou S.-R."/>
            <person name="Boutin A."/>
            <person name="Hackett J."/>
            <person name="Stroud D."/>
            <person name="Mayhew G.F."/>
            <person name="Rose D.J."/>
            <person name="Zhou S."/>
            <person name="Schwartz D.C."/>
            <person name="Perna N.T."/>
            <person name="Mobley H.L.T."/>
            <person name="Donnenberg M.S."/>
            <person name="Blattner F.R."/>
        </authorList>
    </citation>
    <scope>NUCLEOTIDE SEQUENCE [LARGE SCALE GENOMIC DNA]</scope>
    <source>
        <strain>CFT073 / ATCC 700928 / UPEC</strain>
    </source>
</reference>
<sequence>MSVRLVLAKGREKSLLRRHPWVFSGAVARMEGKASLGETIDIVDHQGKWLARGAYSPASQIRARVWTFDPSESIDIAFFTRRLQQAQKWRDWLAQKDGLDSYRLIAGESDGLPGITIDRFGNFLVLQLLSAGAEYQRAALISALQTLYPECAIYDRSDVAVRKKEGMELTQGPITGELPPALLPIEEHGMKLLVDIQHGHKTGYYLDQRDSRLATRRYVENKRVLNCFSYTGGFAVSALMGGCSQVVSVDTSHEALDIARQNVELNKLDLSKAEFVRDDVFKLLRTYRDRGEKFDVIVMDPPKFVENKSQLMGACRGYKDINMLAIQLLNEGGILLTFSCSGLMTSDLFQKIIADAAIDAGRDVQFIEQFRQAADHPVIATYPEGLYLKGFACRVM</sequence>
<accession>Q8FJ71</accession>
<dbReference type="EC" id="2.1.1.191" evidence="1"/>
<dbReference type="EMBL" id="AE014075">
    <property type="protein sequence ID" value="AAN79573.1"/>
    <property type="molecule type" value="Genomic_DNA"/>
</dbReference>
<dbReference type="RefSeq" id="WP_000116315.1">
    <property type="nucleotide sequence ID" value="NZ_CP051263.1"/>
</dbReference>
<dbReference type="SMR" id="Q8FJ71"/>
<dbReference type="STRING" id="199310.c1105"/>
<dbReference type="KEGG" id="ecc:c1105"/>
<dbReference type="eggNOG" id="COG1092">
    <property type="taxonomic scope" value="Bacteria"/>
</dbReference>
<dbReference type="HOGENOM" id="CLU_014042_0_0_6"/>
<dbReference type="BioCyc" id="ECOL199310:C1105-MONOMER"/>
<dbReference type="Proteomes" id="UP000001410">
    <property type="component" value="Chromosome"/>
</dbReference>
<dbReference type="GO" id="GO:0005737">
    <property type="term" value="C:cytoplasm"/>
    <property type="evidence" value="ECO:0007669"/>
    <property type="project" value="UniProtKB-SubCell"/>
</dbReference>
<dbReference type="GO" id="GO:0003723">
    <property type="term" value="F:RNA binding"/>
    <property type="evidence" value="ECO:0007669"/>
    <property type="project" value="UniProtKB-KW"/>
</dbReference>
<dbReference type="GO" id="GO:0016434">
    <property type="term" value="F:rRNA (cytosine) methyltransferase activity"/>
    <property type="evidence" value="ECO:0007669"/>
    <property type="project" value="UniProtKB-UniRule"/>
</dbReference>
<dbReference type="CDD" id="cd02440">
    <property type="entry name" value="AdoMet_MTases"/>
    <property type="match status" value="1"/>
</dbReference>
<dbReference type="CDD" id="cd21153">
    <property type="entry name" value="PUA_RlmI"/>
    <property type="match status" value="1"/>
</dbReference>
<dbReference type="CDD" id="cd11572">
    <property type="entry name" value="RlmI_M_like"/>
    <property type="match status" value="1"/>
</dbReference>
<dbReference type="FunFam" id="2.30.130.10:FF:000005">
    <property type="entry name" value="Ribosomal RNA large subunit methyltransferase I"/>
    <property type="match status" value="1"/>
</dbReference>
<dbReference type="FunFam" id="3.30.750.80:FF:000002">
    <property type="entry name" value="Ribosomal RNA large subunit methyltransferase I"/>
    <property type="match status" value="1"/>
</dbReference>
<dbReference type="FunFam" id="3.40.50.150:FF:000044">
    <property type="entry name" value="Ribosomal RNA large subunit methyltransferase I"/>
    <property type="match status" value="1"/>
</dbReference>
<dbReference type="Gene3D" id="2.30.130.10">
    <property type="entry name" value="PUA domain"/>
    <property type="match status" value="1"/>
</dbReference>
<dbReference type="Gene3D" id="3.30.750.80">
    <property type="entry name" value="RNA methyltransferase domain (HRMD) like"/>
    <property type="match status" value="1"/>
</dbReference>
<dbReference type="Gene3D" id="3.40.50.150">
    <property type="entry name" value="Vaccinia Virus protein VP39"/>
    <property type="match status" value="1"/>
</dbReference>
<dbReference type="HAMAP" id="MF_01857">
    <property type="entry name" value="23SrRNA_methyltr_I"/>
    <property type="match status" value="1"/>
</dbReference>
<dbReference type="InterPro" id="IPR002478">
    <property type="entry name" value="PUA"/>
</dbReference>
<dbReference type="InterPro" id="IPR015947">
    <property type="entry name" value="PUA-like_sf"/>
</dbReference>
<dbReference type="InterPro" id="IPR036974">
    <property type="entry name" value="PUA_sf"/>
</dbReference>
<dbReference type="InterPro" id="IPR023542">
    <property type="entry name" value="RLMI"/>
</dbReference>
<dbReference type="InterPro" id="IPR041532">
    <property type="entry name" value="RlmI-like_PUA"/>
</dbReference>
<dbReference type="InterPro" id="IPR019614">
    <property type="entry name" value="SAM-dep_methyl-trfase"/>
</dbReference>
<dbReference type="InterPro" id="IPR029063">
    <property type="entry name" value="SAM-dependent_MTases_sf"/>
</dbReference>
<dbReference type="NCBIfam" id="NF011707">
    <property type="entry name" value="PRK15128.1"/>
    <property type="match status" value="1"/>
</dbReference>
<dbReference type="PANTHER" id="PTHR42873">
    <property type="entry name" value="RIBOSOMAL RNA LARGE SUBUNIT METHYLTRANSFERASE"/>
    <property type="match status" value="1"/>
</dbReference>
<dbReference type="PANTHER" id="PTHR42873:SF1">
    <property type="entry name" value="S-ADENOSYLMETHIONINE-DEPENDENT METHYLTRANSFERASE DOMAIN-CONTAINING PROTEIN"/>
    <property type="match status" value="1"/>
</dbReference>
<dbReference type="Pfam" id="PF10672">
    <property type="entry name" value="Methyltrans_SAM"/>
    <property type="match status" value="1"/>
</dbReference>
<dbReference type="Pfam" id="PF17785">
    <property type="entry name" value="PUA_3"/>
    <property type="match status" value="1"/>
</dbReference>
<dbReference type="SMART" id="SM00359">
    <property type="entry name" value="PUA"/>
    <property type="match status" value="1"/>
</dbReference>
<dbReference type="SUPFAM" id="SSF88697">
    <property type="entry name" value="PUA domain-like"/>
    <property type="match status" value="1"/>
</dbReference>
<dbReference type="SUPFAM" id="SSF53335">
    <property type="entry name" value="S-adenosyl-L-methionine-dependent methyltransferases"/>
    <property type="match status" value="1"/>
</dbReference>
<dbReference type="PROSITE" id="PS50890">
    <property type="entry name" value="PUA"/>
    <property type="match status" value="1"/>
</dbReference>
<proteinExistence type="inferred from homology"/>
<evidence type="ECO:0000255" key="1">
    <source>
        <dbReference type="HAMAP-Rule" id="MF_01857"/>
    </source>
</evidence>
<protein>
    <recommendedName>
        <fullName evidence="1">Ribosomal RNA large subunit methyltransferase I</fullName>
        <ecNumber evidence="1">2.1.1.191</ecNumber>
    </recommendedName>
    <alternativeName>
        <fullName evidence="1">23S rRNA m5C1962 methyltransferase</fullName>
    </alternativeName>
    <alternativeName>
        <fullName evidence="1">rRNA (cytosine-C(5)-)-methyltransferase RlmI</fullName>
    </alternativeName>
</protein>
<comment type="function">
    <text evidence="1">Specifically methylates the cytosine at position 1962 (m5C1962) of 23S rRNA.</text>
</comment>
<comment type="catalytic activity">
    <reaction evidence="1">
        <text>cytidine(1962) in 23S rRNA + S-adenosyl-L-methionine = 5-methylcytidine(1962) in 23S rRNA + S-adenosyl-L-homocysteine + H(+)</text>
        <dbReference type="Rhea" id="RHEA:42912"/>
        <dbReference type="Rhea" id="RHEA-COMP:10382"/>
        <dbReference type="Rhea" id="RHEA-COMP:10386"/>
        <dbReference type="ChEBI" id="CHEBI:15378"/>
        <dbReference type="ChEBI" id="CHEBI:57856"/>
        <dbReference type="ChEBI" id="CHEBI:59789"/>
        <dbReference type="ChEBI" id="CHEBI:74483"/>
        <dbReference type="ChEBI" id="CHEBI:82748"/>
        <dbReference type="EC" id="2.1.1.191"/>
    </reaction>
</comment>
<comment type="subcellular location">
    <subcellularLocation>
        <location evidence="1">Cytoplasm</location>
    </subcellularLocation>
</comment>
<comment type="similarity">
    <text evidence="1">Belongs to the methyltransferase superfamily. RlmI family.</text>
</comment>
<gene>
    <name evidence="1" type="primary">rlmI</name>
    <name type="ordered locus">c1105</name>
</gene>